<gene>
    <name evidence="1" type="primary">ileS</name>
    <name type="ordered locus">EcSMS35_0024</name>
</gene>
<dbReference type="EC" id="6.1.1.5" evidence="1"/>
<dbReference type="EMBL" id="CP000970">
    <property type="protein sequence ID" value="ACB19918.1"/>
    <property type="molecule type" value="Genomic_DNA"/>
</dbReference>
<dbReference type="RefSeq" id="WP_001286881.1">
    <property type="nucleotide sequence ID" value="NC_010498.1"/>
</dbReference>
<dbReference type="SMR" id="B1LFV6"/>
<dbReference type="KEGG" id="ecm:EcSMS35_0024"/>
<dbReference type="HOGENOM" id="CLU_001493_7_1_6"/>
<dbReference type="Proteomes" id="UP000007011">
    <property type="component" value="Chromosome"/>
</dbReference>
<dbReference type="GO" id="GO:0005829">
    <property type="term" value="C:cytosol"/>
    <property type="evidence" value="ECO:0007669"/>
    <property type="project" value="TreeGrafter"/>
</dbReference>
<dbReference type="GO" id="GO:0002161">
    <property type="term" value="F:aminoacyl-tRNA deacylase activity"/>
    <property type="evidence" value="ECO:0007669"/>
    <property type="project" value="InterPro"/>
</dbReference>
<dbReference type="GO" id="GO:0005524">
    <property type="term" value="F:ATP binding"/>
    <property type="evidence" value="ECO:0007669"/>
    <property type="project" value="UniProtKB-UniRule"/>
</dbReference>
<dbReference type="GO" id="GO:0004822">
    <property type="term" value="F:isoleucine-tRNA ligase activity"/>
    <property type="evidence" value="ECO:0007669"/>
    <property type="project" value="UniProtKB-UniRule"/>
</dbReference>
<dbReference type="GO" id="GO:0000049">
    <property type="term" value="F:tRNA binding"/>
    <property type="evidence" value="ECO:0007669"/>
    <property type="project" value="InterPro"/>
</dbReference>
<dbReference type="GO" id="GO:0008270">
    <property type="term" value="F:zinc ion binding"/>
    <property type="evidence" value="ECO:0007669"/>
    <property type="project" value="UniProtKB-UniRule"/>
</dbReference>
<dbReference type="GO" id="GO:0006428">
    <property type="term" value="P:isoleucyl-tRNA aminoacylation"/>
    <property type="evidence" value="ECO:0007669"/>
    <property type="project" value="UniProtKB-UniRule"/>
</dbReference>
<dbReference type="CDD" id="cd07960">
    <property type="entry name" value="Anticodon_Ia_Ile_BEm"/>
    <property type="match status" value="1"/>
</dbReference>
<dbReference type="CDD" id="cd00818">
    <property type="entry name" value="IleRS_core"/>
    <property type="match status" value="1"/>
</dbReference>
<dbReference type="FunFam" id="1.10.730.20:FF:000001">
    <property type="entry name" value="Isoleucine--tRNA ligase"/>
    <property type="match status" value="1"/>
</dbReference>
<dbReference type="FunFam" id="3.40.50.620:FF:000042">
    <property type="entry name" value="Isoleucine--tRNA ligase"/>
    <property type="match status" value="1"/>
</dbReference>
<dbReference type="FunFam" id="3.40.50.620:FF:000048">
    <property type="entry name" value="Isoleucine--tRNA ligase"/>
    <property type="match status" value="1"/>
</dbReference>
<dbReference type="FunFam" id="3.90.740.10:FF:000002">
    <property type="entry name" value="Isoleucine--tRNA ligase"/>
    <property type="match status" value="1"/>
</dbReference>
<dbReference type="Gene3D" id="1.10.730.20">
    <property type="match status" value="1"/>
</dbReference>
<dbReference type="Gene3D" id="3.40.50.620">
    <property type="entry name" value="HUPs"/>
    <property type="match status" value="2"/>
</dbReference>
<dbReference type="Gene3D" id="3.90.740.10">
    <property type="entry name" value="Valyl/Leucyl/Isoleucyl-tRNA synthetase, editing domain"/>
    <property type="match status" value="1"/>
</dbReference>
<dbReference type="HAMAP" id="MF_02002">
    <property type="entry name" value="Ile_tRNA_synth_type1"/>
    <property type="match status" value="1"/>
</dbReference>
<dbReference type="InterPro" id="IPR001412">
    <property type="entry name" value="aa-tRNA-synth_I_CS"/>
</dbReference>
<dbReference type="InterPro" id="IPR002300">
    <property type="entry name" value="aa-tRNA-synth_Ia"/>
</dbReference>
<dbReference type="InterPro" id="IPR033708">
    <property type="entry name" value="Anticodon_Ile_BEm"/>
</dbReference>
<dbReference type="InterPro" id="IPR002301">
    <property type="entry name" value="Ile-tRNA-ligase"/>
</dbReference>
<dbReference type="InterPro" id="IPR023585">
    <property type="entry name" value="Ile-tRNA-ligase_type1"/>
</dbReference>
<dbReference type="InterPro" id="IPR050081">
    <property type="entry name" value="Ile-tRNA_ligase"/>
</dbReference>
<dbReference type="InterPro" id="IPR013155">
    <property type="entry name" value="M/V/L/I-tRNA-synth_anticd-bd"/>
</dbReference>
<dbReference type="InterPro" id="IPR014729">
    <property type="entry name" value="Rossmann-like_a/b/a_fold"/>
</dbReference>
<dbReference type="InterPro" id="IPR009080">
    <property type="entry name" value="tRNAsynth_Ia_anticodon-bd"/>
</dbReference>
<dbReference type="InterPro" id="IPR009008">
    <property type="entry name" value="Val/Leu/Ile-tRNA-synth_edit"/>
</dbReference>
<dbReference type="InterPro" id="IPR010663">
    <property type="entry name" value="Znf_FPG/IleRS"/>
</dbReference>
<dbReference type="NCBIfam" id="TIGR00392">
    <property type="entry name" value="ileS"/>
    <property type="match status" value="1"/>
</dbReference>
<dbReference type="PANTHER" id="PTHR42765:SF1">
    <property type="entry name" value="ISOLEUCINE--TRNA LIGASE, MITOCHONDRIAL"/>
    <property type="match status" value="1"/>
</dbReference>
<dbReference type="PANTHER" id="PTHR42765">
    <property type="entry name" value="SOLEUCYL-TRNA SYNTHETASE"/>
    <property type="match status" value="1"/>
</dbReference>
<dbReference type="Pfam" id="PF08264">
    <property type="entry name" value="Anticodon_1"/>
    <property type="match status" value="1"/>
</dbReference>
<dbReference type="Pfam" id="PF00133">
    <property type="entry name" value="tRNA-synt_1"/>
    <property type="match status" value="1"/>
</dbReference>
<dbReference type="Pfam" id="PF06827">
    <property type="entry name" value="zf-FPG_IleRS"/>
    <property type="match status" value="1"/>
</dbReference>
<dbReference type="PRINTS" id="PR00984">
    <property type="entry name" value="TRNASYNTHILE"/>
</dbReference>
<dbReference type="SUPFAM" id="SSF47323">
    <property type="entry name" value="Anticodon-binding domain of a subclass of class I aminoacyl-tRNA synthetases"/>
    <property type="match status" value="1"/>
</dbReference>
<dbReference type="SUPFAM" id="SSF52374">
    <property type="entry name" value="Nucleotidylyl transferase"/>
    <property type="match status" value="1"/>
</dbReference>
<dbReference type="SUPFAM" id="SSF50677">
    <property type="entry name" value="ValRS/IleRS/LeuRS editing domain"/>
    <property type="match status" value="1"/>
</dbReference>
<dbReference type="PROSITE" id="PS00178">
    <property type="entry name" value="AA_TRNA_LIGASE_I"/>
    <property type="match status" value="1"/>
</dbReference>
<proteinExistence type="inferred from homology"/>
<reference key="1">
    <citation type="journal article" date="2008" name="J. Bacteriol.">
        <title>Insights into the environmental resistance gene pool from the genome sequence of the multidrug-resistant environmental isolate Escherichia coli SMS-3-5.</title>
        <authorList>
            <person name="Fricke W.F."/>
            <person name="Wright M.S."/>
            <person name="Lindell A.H."/>
            <person name="Harkins D.M."/>
            <person name="Baker-Austin C."/>
            <person name="Ravel J."/>
            <person name="Stepanauskas R."/>
        </authorList>
    </citation>
    <scope>NUCLEOTIDE SEQUENCE [LARGE SCALE GENOMIC DNA]</scope>
    <source>
        <strain>SMS-3-5 / SECEC</strain>
    </source>
</reference>
<keyword id="KW-0007">Acetylation</keyword>
<keyword id="KW-0030">Aminoacyl-tRNA synthetase</keyword>
<keyword id="KW-0067">ATP-binding</keyword>
<keyword id="KW-0963">Cytoplasm</keyword>
<keyword id="KW-0436">Ligase</keyword>
<keyword id="KW-0479">Metal-binding</keyword>
<keyword id="KW-0547">Nucleotide-binding</keyword>
<keyword id="KW-0648">Protein biosynthesis</keyword>
<keyword id="KW-0862">Zinc</keyword>
<accession>B1LFV6</accession>
<feature type="chain" id="PRO_1000189163" description="Isoleucine--tRNA ligase">
    <location>
        <begin position="1"/>
        <end position="938"/>
    </location>
</feature>
<feature type="short sequence motif" description="'HIGH' region">
    <location>
        <begin position="58"/>
        <end position="68"/>
    </location>
</feature>
<feature type="short sequence motif" description="'KMSKS' region">
    <location>
        <begin position="602"/>
        <end position="606"/>
    </location>
</feature>
<feature type="binding site" evidence="1">
    <location>
        <position position="561"/>
    </location>
    <ligand>
        <name>L-isoleucyl-5'-AMP</name>
        <dbReference type="ChEBI" id="CHEBI:178002"/>
    </ligand>
</feature>
<feature type="binding site" evidence="1">
    <location>
        <position position="605"/>
    </location>
    <ligand>
        <name>ATP</name>
        <dbReference type="ChEBI" id="CHEBI:30616"/>
    </ligand>
</feature>
<feature type="binding site" evidence="1">
    <location>
        <position position="901"/>
    </location>
    <ligand>
        <name>Zn(2+)</name>
        <dbReference type="ChEBI" id="CHEBI:29105"/>
    </ligand>
</feature>
<feature type="binding site" evidence="1">
    <location>
        <position position="904"/>
    </location>
    <ligand>
        <name>Zn(2+)</name>
        <dbReference type="ChEBI" id="CHEBI:29105"/>
    </ligand>
</feature>
<feature type="binding site" evidence="1">
    <location>
        <position position="921"/>
    </location>
    <ligand>
        <name>Zn(2+)</name>
        <dbReference type="ChEBI" id="CHEBI:29105"/>
    </ligand>
</feature>
<feature type="binding site" evidence="1">
    <location>
        <position position="924"/>
    </location>
    <ligand>
        <name>Zn(2+)</name>
        <dbReference type="ChEBI" id="CHEBI:29105"/>
    </ligand>
</feature>
<feature type="modified residue" description="N6-acetyllysine" evidence="1">
    <location>
        <position position="183"/>
    </location>
</feature>
<name>SYI_ECOSM</name>
<evidence type="ECO:0000255" key="1">
    <source>
        <dbReference type="HAMAP-Rule" id="MF_02002"/>
    </source>
</evidence>
<protein>
    <recommendedName>
        <fullName evidence="1">Isoleucine--tRNA ligase</fullName>
        <ecNumber evidence="1">6.1.1.5</ecNumber>
    </recommendedName>
    <alternativeName>
        <fullName evidence="1">Isoleucyl-tRNA synthetase</fullName>
        <shortName evidence="1">IleRS</shortName>
    </alternativeName>
</protein>
<comment type="function">
    <text evidence="1">Catalyzes the attachment of isoleucine to tRNA(Ile). As IleRS can inadvertently accommodate and process structurally similar amino acids such as valine, to avoid such errors it has two additional distinct tRNA(Ile)-dependent editing activities. One activity is designated as 'pretransfer' editing and involves the hydrolysis of activated Val-AMP. The other activity is designated 'posttransfer' editing and involves deacylation of mischarged Val-tRNA(Ile).</text>
</comment>
<comment type="catalytic activity">
    <reaction evidence="1">
        <text>tRNA(Ile) + L-isoleucine + ATP = L-isoleucyl-tRNA(Ile) + AMP + diphosphate</text>
        <dbReference type="Rhea" id="RHEA:11060"/>
        <dbReference type="Rhea" id="RHEA-COMP:9666"/>
        <dbReference type="Rhea" id="RHEA-COMP:9695"/>
        <dbReference type="ChEBI" id="CHEBI:30616"/>
        <dbReference type="ChEBI" id="CHEBI:33019"/>
        <dbReference type="ChEBI" id="CHEBI:58045"/>
        <dbReference type="ChEBI" id="CHEBI:78442"/>
        <dbReference type="ChEBI" id="CHEBI:78528"/>
        <dbReference type="ChEBI" id="CHEBI:456215"/>
        <dbReference type="EC" id="6.1.1.5"/>
    </reaction>
</comment>
<comment type="cofactor">
    <cofactor evidence="1">
        <name>Zn(2+)</name>
        <dbReference type="ChEBI" id="CHEBI:29105"/>
    </cofactor>
    <text evidence="1">Binds 1 zinc ion per subunit.</text>
</comment>
<comment type="subunit">
    <text evidence="1">Monomer.</text>
</comment>
<comment type="subcellular location">
    <subcellularLocation>
        <location evidence="1">Cytoplasm</location>
    </subcellularLocation>
</comment>
<comment type="domain">
    <text evidence="1">IleRS has two distinct active sites: one for aminoacylation and one for editing. The misactivated valine is translocated from the active site to the editing site, which sterically excludes the correctly activated isoleucine. The single editing site contains two valyl binding pockets, one specific for each substrate (Val-AMP or Val-tRNA(Ile)).</text>
</comment>
<comment type="similarity">
    <text evidence="1">Belongs to the class-I aminoacyl-tRNA synthetase family. IleS type 1 subfamily.</text>
</comment>
<sequence>MSDYKSTLNLPETGFPMRGDLAKREPGMLARWTDDDLYGIIRAAKKGKKTFILHDGPPYANGSIHIGHSVNKILKDIIVKSKGLSGYDSPYVPGWDCHGLPIELKVEQEYGKPGEKFTAAEFRAKCREYAATQVDGQRKDFIRLGVLGDWSHPYLTMDFKTEANIIRALGKIIGNGHLHKGAKPVHWCVDCRSALAEAEVEYYDKTSPSIDVAFQAVDQDALKAKFAVSNVNGPISLVIWTTTPWTLPANRAISIAPDFDYVLVQIDGQAVILAKDLVESVMQRIGVTDYTILGTVKGAELELLRFTHPFMGFDVPAILGDHVTLDAGTGAVHTAPGHGPDDYVIGQKYGLETANPVGPDGTYLPGTYPTLDGVNVFKANDIVVALLQEKGALLHVEKMQHSYPCCWRHKTPIIFRATPQWFVSMDQKGLRAQSLKEIKGVQWIPDWGQARIESMVANRPDWCISRQRTWGVPMSLFVHKDTEELHPRTLELMEEVAKRVEVDGIQAWWDLDAKEILGDEADQYVKVPDTLDVWFDSGSTHSSVVDVRPEFAGHAADMYLEGSDQHRGWFMSSLMISTAMKGKAPYRQVLTHGFTVDGQGRKMSKSIGNTVSPQDVMNKLGADILRLWVASTDYTGEMAVSDEILKRAADSYRRIRNTARFLLANLNGFDPAKDMVKPEEMVVLDRWAVGCAKAAQEDILKAYEAYDFHEVVQRLMRFCSVEMGSFYLDIIKDRQYTAKADSVARRSCQTALYHIAEALVRWMAPILSFTADEVWGYLPGEREKYVFTGEWYEGLFGLADSEAMNDAFWDELLKVRGEVNKVIEQARADKKVGGSLEAAVTLYAEPELAAKLTALGDELRFVLLTSGATVADYNDAPADAQQSEVLKGLKVALSKAEGEKCPRCWHYTQDVGKVAEHAEICGRCVSNVAGDGEKRKFA</sequence>
<organism>
    <name type="scientific">Escherichia coli (strain SMS-3-5 / SECEC)</name>
    <dbReference type="NCBI Taxonomy" id="439855"/>
    <lineage>
        <taxon>Bacteria</taxon>
        <taxon>Pseudomonadati</taxon>
        <taxon>Pseudomonadota</taxon>
        <taxon>Gammaproteobacteria</taxon>
        <taxon>Enterobacterales</taxon>
        <taxon>Enterobacteriaceae</taxon>
        <taxon>Escherichia</taxon>
    </lineage>
</organism>